<comment type="function">
    <text evidence="1">This is one of the proteins that binds to the 5S RNA in the ribosome where it forms part of the central protuberance.</text>
</comment>
<comment type="subunit">
    <text evidence="1">Part of the 50S ribosomal subunit; part of the 5S rRNA/L5/L18/L25 subcomplex. Contacts the 5S rRNA. Binds to the 5S rRNA independently of L5 and L18.</text>
</comment>
<comment type="similarity">
    <text evidence="1">Belongs to the bacterial ribosomal protein bL25 family. CTC subfamily.</text>
</comment>
<reference key="1">
    <citation type="journal article" date="2006" name="J. Bacteriol.">
        <title>The genome of the obligately intracellular bacterium Ehrlichia canis reveals themes of complex membrane structure and immune evasion strategies.</title>
        <authorList>
            <person name="Mavromatis K."/>
            <person name="Doyle C.K."/>
            <person name="Lykidis A."/>
            <person name="Ivanova N."/>
            <person name="Francino M.P."/>
            <person name="Chain P."/>
            <person name="Shin M."/>
            <person name="Malfatti S."/>
            <person name="Larimer F."/>
            <person name="Copeland A."/>
            <person name="Detter J.C."/>
            <person name="Land M."/>
            <person name="Richardson P.M."/>
            <person name="Yu X.J."/>
            <person name="Walker D.H."/>
            <person name="McBride J.W."/>
            <person name="Kyrpides N.C."/>
        </authorList>
    </citation>
    <scope>NUCLEOTIDE SEQUENCE [LARGE SCALE GENOMIC DNA]</scope>
    <source>
        <strain>Jake</strain>
    </source>
</reference>
<keyword id="KW-0687">Ribonucleoprotein</keyword>
<keyword id="KW-0689">Ribosomal protein</keyword>
<keyword id="KW-0694">RNA-binding</keyword>
<keyword id="KW-0699">rRNA-binding</keyword>
<accession>Q3YT12</accession>
<organism>
    <name type="scientific">Ehrlichia canis (strain Jake)</name>
    <dbReference type="NCBI Taxonomy" id="269484"/>
    <lineage>
        <taxon>Bacteria</taxon>
        <taxon>Pseudomonadati</taxon>
        <taxon>Pseudomonadota</taxon>
        <taxon>Alphaproteobacteria</taxon>
        <taxon>Rickettsiales</taxon>
        <taxon>Anaplasmataceae</taxon>
        <taxon>Ehrlichia</taxon>
    </lineage>
</organism>
<name>RL25_EHRCJ</name>
<protein>
    <recommendedName>
        <fullName evidence="1">Large ribosomal subunit protein bL25</fullName>
    </recommendedName>
    <alternativeName>
        <fullName evidence="3">50S ribosomal protein L25</fullName>
    </alternativeName>
    <alternativeName>
        <fullName evidence="1">General stress protein CTC</fullName>
    </alternativeName>
</protein>
<proteinExistence type="inferred from homology"/>
<gene>
    <name evidence="1" type="primary">rplY</name>
    <name evidence="1" type="synonym">ctc</name>
    <name type="ordered locus">Ecaj_0092</name>
</gene>
<dbReference type="EMBL" id="CP000107">
    <property type="protein sequence ID" value="AAZ68143.1"/>
    <property type="molecule type" value="Genomic_DNA"/>
</dbReference>
<dbReference type="RefSeq" id="WP_011304221.1">
    <property type="nucleotide sequence ID" value="NC_007354.1"/>
</dbReference>
<dbReference type="SMR" id="Q3YT12"/>
<dbReference type="STRING" id="269484.Ecaj_0092"/>
<dbReference type="KEGG" id="ecn:Ecaj_0092"/>
<dbReference type="eggNOG" id="COG1825">
    <property type="taxonomic scope" value="Bacteria"/>
</dbReference>
<dbReference type="HOGENOM" id="CLU_075939_0_1_5"/>
<dbReference type="InParanoid" id="Q3YT12"/>
<dbReference type="Proteomes" id="UP000000435">
    <property type="component" value="Chromosome"/>
</dbReference>
<dbReference type="GO" id="GO:0022625">
    <property type="term" value="C:cytosolic large ribosomal subunit"/>
    <property type="evidence" value="ECO:0007669"/>
    <property type="project" value="TreeGrafter"/>
</dbReference>
<dbReference type="GO" id="GO:0008097">
    <property type="term" value="F:5S rRNA binding"/>
    <property type="evidence" value="ECO:0007669"/>
    <property type="project" value="InterPro"/>
</dbReference>
<dbReference type="GO" id="GO:0003735">
    <property type="term" value="F:structural constituent of ribosome"/>
    <property type="evidence" value="ECO:0007669"/>
    <property type="project" value="InterPro"/>
</dbReference>
<dbReference type="GO" id="GO:0006412">
    <property type="term" value="P:translation"/>
    <property type="evidence" value="ECO:0007669"/>
    <property type="project" value="UniProtKB-UniRule"/>
</dbReference>
<dbReference type="CDD" id="cd00495">
    <property type="entry name" value="Ribosomal_L25_TL5_CTC"/>
    <property type="match status" value="1"/>
</dbReference>
<dbReference type="Gene3D" id="2.170.120.20">
    <property type="entry name" value="Ribosomal protein L25, beta domain"/>
    <property type="match status" value="1"/>
</dbReference>
<dbReference type="Gene3D" id="2.40.240.10">
    <property type="entry name" value="Ribosomal Protein L25, Chain P"/>
    <property type="match status" value="1"/>
</dbReference>
<dbReference type="HAMAP" id="MF_01334">
    <property type="entry name" value="Ribosomal_bL25_CTC"/>
    <property type="match status" value="1"/>
</dbReference>
<dbReference type="InterPro" id="IPR020056">
    <property type="entry name" value="Rbsml_bL25/Gln-tRNA_synth_N"/>
</dbReference>
<dbReference type="InterPro" id="IPR011035">
    <property type="entry name" value="Ribosomal_bL25/Gln-tRNA_synth"/>
</dbReference>
<dbReference type="InterPro" id="IPR020057">
    <property type="entry name" value="Ribosomal_bL25_b-dom"/>
</dbReference>
<dbReference type="InterPro" id="IPR037121">
    <property type="entry name" value="Ribosomal_bL25_C"/>
</dbReference>
<dbReference type="InterPro" id="IPR001021">
    <property type="entry name" value="Ribosomal_bL25_long"/>
</dbReference>
<dbReference type="InterPro" id="IPR029751">
    <property type="entry name" value="Ribosomal_L25_dom"/>
</dbReference>
<dbReference type="InterPro" id="IPR020930">
    <property type="entry name" value="Ribosomal_uL5_bac-type"/>
</dbReference>
<dbReference type="NCBIfam" id="TIGR00731">
    <property type="entry name" value="bL25_bact_ctc"/>
    <property type="match status" value="1"/>
</dbReference>
<dbReference type="NCBIfam" id="NF004128">
    <property type="entry name" value="PRK05618.1-2"/>
    <property type="match status" value="1"/>
</dbReference>
<dbReference type="NCBIfam" id="NF004612">
    <property type="entry name" value="PRK05943.1"/>
    <property type="match status" value="1"/>
</dbReference>
<dbReference type="PANTHER" id="PTHR33284">
    <property type="entry name" value="RIBOSOMAL PROTEIN L25/GLN-TRNA SYNTHETASE, ANTI-CODON-BINDING DOMAIN-CONTAINING PROTEIN"/>
    <property type="match status" value="1"/>
</dbReference>
<dbReference type="PANTHER" id="PTHR33284:SF1">
    <property type="entry name" value="RIBOSOMAL PROTEIN L25_GLN-TRNA SYNTHETASE, ANTI-CODON-BINDING DOMAIN-CONTAINING PROTEIN"/>
    <property type="match status" value="1"/>
</dbReference>
<dbReference type="Pfam" id="PF01386">
    <property type="entry name" value="Ribosomal_L25p"/>
    <property type="match status" value="1"/>
</dbReference>
<dbReference type="Pfam" id="PF14693">
    <property type="entry name" value="Ribosomal_TL5_C"/>
    <property type="match status" value="1"/>
</dbReference>
<dbReference type="SUPFAM" id="SSF50715">
    <property type="entry name" value="Ribosomal protein L25-like"/>
    <property type="match status" value="1"/>
</dbReference>
<feature type="chain" id="PRO_0000244209" description="Large ribosomal subunit protein bL25">
    <location>
        <begin position="1"/>
        <end position="209"/>
    </location>
</feature>
<feature type="region of interest" description="Disordered" evidence="2">
    <location>
        <begin position="188"/>
        <end position="209"/>
    </location>
</feature>
<feature type="compositionally biased region" description="Polar residues" evidence="2">
    <location>
        <begin position="199"/>
        <end position="209"/>
    </location>
</feature>
<sequence>MTDQGIVKINASLRENVGTGPARAVRRNGGIPAVVYGKNRDSLSVFLSDREFLSKHRSAALSTHLIELEIGDKKEYVLMRDVQKHPVTDRIQHVDFQFIDYGTEIKIEVPLIFTNEQKCIGVKRGGVLNILHRTLSIKCLPNAILQNIEIDLSDLTAGHSIHVSDLNLPPEINVVMKEHNPAIVTISSTSMEKEGEGSQEPTAAPSSEN</sequence>
<evidence type="ECO:0000255" key="1">
    <source>
        <dbReference type="HAMAP-Rule" id="MF_01334"/>
    </source>
</evidence>
<evidence type="ECO:0000256" key="2">
    <source>
        <dbReference type="SAM" id="MobiDB-lite"/>
    </source>
</evidence>
<evidence type="ECO:0000305" key="3"/>